<name>DNAJ_NITOC</name>
<organism>
    <name type="scientific">Nitrosococcus oceani (strain ATCC 19707 / BCRC 17464 / JCM 30415 / NCIMB 11848 / C-107)</name>
    <dbReference type="NCBI Taxonomy" id="323261"/>
    <lineage>
        <taxon>Bacteria</taxon>
        <taxon>Pseudomonadati</taxon>
        <taxon>Pseudomonadota</taxon>
        <taxon>Gammaproteobacteria</taxon>
        <taxon>Chromatiales</taxon>
        <taxon>Chromatiaceae</taxon>
        <taxon>Nitrosococcus</taxon>
    </lineage>
</organism>
<keyword id="KW-0143">Chaperone</keyword>
<keyword id="KW-0963">Cytoplasm</keyword>
<keyword id="KW-0235">DNA replication</keyword>
<keyword id="KW-0479">Metal-binding</keyword>
<keyword id="KW-1185">Reference proteome</keyword>
<keyword id="KW-0677">Repeat</keyword>
<keyword id="KW-0346">Stress response</keyword>
<keyword id="KW-0862">Zinc</keyword>
<keyword id="KW-0863">Zinc-finger</keyword>
<gene>
    <name evidence="1" type="primary">dnaJ</name>
    <name type="ordered locus">Noc_2810</name>
</gene>
<reference key="1">
    <citation type="journal article" date="2006" name="Appl. Environ. Microbiol.">
        <title>Complete genome sequence of the marine, chemolithoautotrophic, ammonia-oxidizing bacterium Nitrosococcus oceani ATCC 19707.</title>
        <authorList>
            <person name="Klotz M.G."/>
            <person name="Arp D.J."/>
            <person name="Chain P.S.G."/>
            <person name="El-Sheikh A.F."/>
            <person name="Hauser L.J."/>
            <person name="Hommes N.G."/>
            <person name="Larimer F.W."/>
            <person name="Malfatti S.A."/>
            <person name="Norton J.M."/>
            <person name="Poret-Peterson A.T."/>
            <person name="Vergez L.M."/>
            <person name="Ward B.B."/>
        </authorList>
    </citation>
    <scope>NUCLEOTIDE SEQUENCE [LARGE SCALE GENOMIC DNA]</scope>
    <source>
        <strain>ATCC 19707 / BCRC 17464 / JCM 30415 / NCIMB 11848 / C-107</strain>
    </source>
</reference>
<proteinExistence type="inferred from homology"/>
<protein>
    <recommendedName>
        <fullName evidence="1">Chaperone protein DnaJ</fullName>
    </recommendedName>
</protein>
<dbReference type="EMBL" id="CP000127">
    <property type="protein sequence ID" value="ABA59257.1"/>
    <property type="molecule type" value="Genomic_DNA"/>
</dbReference>
<dbReference type="RefSeq" id="WP_002812525.1">
    <property type="nucleotide sequence ID" value="NC_007484.1"/>
</dbReference>
<dbReference type="SMR" id="Q3J7D9"/>
<dbReference type="FunCoup" id="Q3J7D9">
    <property type="interactions" value="610"/>
</dbReference>
<dbReference type="STRING" id="323261.Noc_2810"/>
<dbReference type="KEGG" id="noc:Noc_2810"/>
<dbReference type="eggNOG" id="COG0484">
    <property type="taxonomic scope" value="Bacteria"/>
</dbReference>
<dbReference type="HOGENOM" id="CLU_017633_0_7_6"/>
<dbReference type="InParanoid" id="Q3J7D9"/>
<dbReference type="Proteomes" id="UP000006838">
    <property type="component" value="Chromosome"/>
</dbReference>
<dbReference type="GO" id="GO:0005737">
    <property type="term" value="C:cytoplasm"/>
    <property type="evidence" value="ECO:0007669"/>
    <property type="project" value="UniProtKB-SubCell"/>
</dbReference>
<dbReference type="GO" id="GO:0005524">
    <property type="term" value="F:ATP binding"/>
    <property type="evidence" value="ECO:0007669"/>
    <property type="project" value="InterPro"/>
</dbReference>
<dbReference type="GO" id="GO:0031072">
    <property type="term" value="F:heat shock protein binding"/>
    <property type="evidence" value="ECO:0007669"/>
    <property type="project" value="InterPro"/>
</dbReference>
<dbReference type="GO" id="GO:0051082">
    <property type="term" value="F:unfolded protein binding"/>
    <property type="evidence" value="ECO:0007669"/>
    <property type="project" value="UniProtKB-UniRule"/>
</dbReference>
<dbReference type="GO" id="GO:0008270">
    <property type="term" value="F:zinc ion binding"/>
    <property type="evidence" value="ECO:0007669"/>
    <property type="project" value="UniProtKB-UniRule"/>
</dbReference>
<dbReference type="GO" id="GO:0051085">
    <property type="term" value="P:chaperone cofactor-dependent protein refolding"/>
    <property type="evidence" value="ECO:0007669"/>
    <property type="project" value="TreeGrafter"/>
</dbReference>
<dbReference type="GO" id="GO:0006260">
    <property type="term" value="P:DNA replication"/>
    <property type="evidence" value="ECO:0007669"/>
    <property type="project" value="UniProtKB-KW"/>
</dbReference>
<dbReference type="GO" id="GO:0042026">
    <property type="term" value="P:protein refolding"/>
    <property type="evidence" value="ECO:0007669"/>
    <property type="project" value="TreeGrafter"/>
</dbReference>
<dbReference type="GO" id="GO:0009408">
    <property type="term" value="P:response to heat"/>
    <property type="evidence" value="ECO:0007669"/>
    <property type="project" value="InterPro"/>
</dbReference>
<dbReference type="CDD" id="cd06257">
    <property type="entry name" value="DnaJ"/>
    <property type="match status" value="1"/>
</dbReference>
<dbReference type="CDD" id="cd10747">
    <property type="entry name" value="DnaJ_C"/>
    <property type="match status" value="1"/>
</dbReference>
<dbReference type="CDD" id="cd10719">
    <property type="entry name" value="DnaJ_zf"/>
    <property type="match status" value="1"/>
</dbReference>
<dbReference type="FunFam" id="1.10.287.110:FF:000034">
    <property type="entry name" value="Chaperone protein DnaJ"/>
    <property type="match status" value="1"/>
</dbReference>
<dbReference type="FunFam" id="2.10.230.10:FF:000002">
    <property type="entry name" value="Molecular chaperone DnaJ"/>
    <property type="match status" value="1"/>
</dbReference>
<dbReference type="FunFam" id="2.60.260.20:FF:000004">
    <property type="entry name" value="Molecular chaperone DnaJ"/>
    <property type="match status" value="1"/>
</dbReference>
<dbReference type="FunFam" id="2.60.260.20:FF:000009">
    <property type="entry name" value="Putative Mitochondrial DnaJ chaperone"/>
    <property type="match status" value="1"/>
</dbReference>
<dbReference type="Gene3D" id="1.10.287.110">
    <property type="entry name" value="DnaJ domain"/>
    <property type="match status" value="1"/>
</dbReference>
<dbReference type="Gene3D" id="2.10.230.10">
    <property type="entry name" value="Heat shock protein DnaJ, cysteine-rich domain"/>
    <property type="match status" value="1"/>
</dbReference>
<dbReference type="Gene3D" id="2.60.260.20">
    <property type="entry name" value="Urease metallochaperone UreE, N-terminal domain"/>
    <property type="match status" value="2"/>
</dbReference>
<dbReference type="HAMAP" id="MF_01152">
    <property type="entry name" value="DnaJ"/>
    <property type="match status" value="1"/>
</dbReference>
<dbReference type="InterPro" id="IPR012724">
    <property type="entry name" value="DnaJ"/>
</dbReference>
<dbReference type="InterPro" id="IPR002939">
    <property type="entry name" value="DnaJ_C"/>
</dbReference>
<dbReference type="InterPro" id="IPR001623">
    <property type="entry name" value="DnaJ_domain"/>
</dbReference>
<dbReference type="InterPro" id="IPR018253">
    <property type="entry name" value="DnaJ_domain_CS"/>
</dbReference>
<dbReference type="InterPro" id="IPR008971">
    <property type="entry name" value="HSP40/DnaJ_pept-bd"/>
</dbReference>
<dbReference type="InterPro" id="IPR001305">
    <property type="entry name" value="HSP_DnaJ_Cys-rich_dom"/>
</dbReference>
<dbReference type="InterPro" id="IPR036410">
    <property type="entry name" value="HSP_DnaJ_Cys-rich_dom_sf"/>
</dbReference>
<dbReference type="InterPro" id="IPR036869">
    <property type="entry name" value="J_dom_sf"/>
</dbReference>
<dbReference type="NCBIfam" id="TIGR02349">
    <property type="entry name" value="DnaJ_bact"/>
    <property type="match status" value="1"/>
</dbReference>
<dbReference type="NCBIfam" id="NF008035">
    <property type="entry name" value="PRK10767.1"/>
    <property type="match status" value="1"/>
</dbReference>
<dbReference type="PANTHER" id="PTHR43096:SF48">
    <property type="entry name" value="CHAPERONE PROTEIN DNAJ"/>
    <property type="match status" value="1"/>
</dbReference>
<dbReference type="PANTHER" id="PTHR43096">
    <property type="entry name" value="DNAJ HOMOLOG 1, MITOCHONDRIAL-RELATED"/>
    <property type="match status" value="1"/>
</dbReference>
<dbReference type="Pfam" id="PF00226">
    <property type="entry name" value="DnaJ"/>
    <property type="match status" value="1"/>
</dbReference>
<dbReference type="Pfam" id="PF01556">
    <property type="entry name" value="DnaJ_C"/>
    <property type="match status" value="1"/>
</dbReference>
<dbReference type="Pfam" id="PF00684">
    <property type="entry name" value="DnaJ_CXXCXGXG"/>
    <property type="match status" value="1"/>
</dbReference>
<dbReference type="PRINTS" id="PR00625">
    <property type="entry name" value="JDOMAIN"/>
</dbReference>
<dbReference type="SMART" id="SM00271">
    <property type="entry name" value="DnaJ"/>
    <property type="match status" value="1"/>
</dbReference>
<dbReference type="SUPFAM" id="SSF46565">
    <property type="entry name" value="Chaperone J-domain"/>
    <property type="match status" value="1"/>
</dbReference>
<dbReference type="SUPFAM" id="SSF57938">
    <property type="entry name" value="DnaJ/Hsp40 cysteine-rich domain"/>
    <property type="match status" value="1"/>
</dbReference>
<dbReference type="SUPFAM" id="SSF49493">
    <property type="entry name" value="HSP40/DnaJ peptide-binding domain"/>
    <property type="match status" value="2"/>
</dbReference>
<dbReference type="PROSITE" id="PS00636">
    <property type="entry name" value="DNAJ_1"/>
    <property type="match status" value="1"/>
</dbReference>
<dbReference type="PROSITE" id="PS50076">
    <property type="entry name" value="DNAJ_2"/>
    <property type="match status" value="1"/>
</dbReference>
<dbReference type="PROSITE" id="PS51188">
    <property type="entry name" value="ZF_CR"/>
    <property type="match status" value="1"/>
</dbReference>
<evidence type="ECO:0000255" key="1">
    <source>
        <dbReference type="HAMAP-Rule" id="MF_01152"/>
    </source>
</evidence>
<evidence type="ECO:0000256" key="2">
    <source>
        <dbReference type="SAM" id="MobiDB-lite"/>
    </source>
</evidence>
<accession>Q3J7D9</accession>
<sequence>MAKRDYYEALGVARNASDAEIKKAYRRLAMRYHPDRNPDDKAAEEHFKEIQEAYDVLSDARKRTAYDQFGHAGVGAGASAGPGGHGFEGGSNFGDIFGDVFNDIFGAAAGRGGRRQAYRGADLRYNLDLTLEEAVAGTTAKIRIPTYVACKACEGSGAKPGTSPITCPTCGGHGQVRMQQGFFSLQQTCPRCHGSGQIVDSPCSTCRGEGRVREHKTLSVKIPPGVDTGDRIRLTGEGEAGESGGPPGDLYVQVQIKAHSIFSREGDALHCEVPVSFVAAALGGELDVPTLTGRAKLKIPAGTQSGQVFRLRGKGVSPVRGGSAGDLLCRVMVETPVNLNQEQKELLEKFEASMNRNKKHSPKHHSWLEGVKRFFEDMKF</sequence>
<feature type="chain" id="PRO_1000085234" description="Chaperone protein DnaJ">
    <location>
        <begin position="1"/>
        <end position="380"/>
    </location>
</feature>
<feature type="domain" description="J" evidence="1">
    <location>
        <begin position="5"/>
        <end position="70"/>
    </location>
</feature>
<feature type="repeat" description="CXXCXGXG motif">
    <location>
        <begin position="150"/>
        <end position="157"/>
    </location>
</feature>
<feature type="repeat" description="CXXCXGXG motif">
    <location>
        <begin position="167"/>
        <end position="174"/>
    </location>
</feature>
<feature type="repeat" description="CXXCXGXG motif">
    <location>
        <begin position="189"/>
        <end position="196"/>
    </location>
</feature>
<feature type="repeat" description="CXXCXGXG motif">
    <location>
        <begin position="203"/>
        <end position="210"/>
    </location>
</feature>
<feature type="zinc finger region" description="CR-type" evidence="1">
    <location>
        <begin position="137"/>
        <end position="215"/>
    </location>
</feature>
<feature type="region of interest" description="Disordered" evidence="2">
    <location>
        <begin position="222"/>
        <end position="247"/>
    </location>
</feature>
<feature type="binding site" evidence="1">
    <location>
        <position position="150"/>
    </location>
    <ligand>
        <name>Zn(2+)</name>
        <dbReference type="ChEBI" id="CHEBI:29105"/>
        <label>1</label>
    </ligand>
</feature>
<feature type="binding site" evidence="1">
    <location>
        <position position="153"/>
    </location>
    <ligand>
        <name>Zn(2+)</name>
        <dbReference type="ChEBI" id="CHEBI:29105"/>
        <label>1</label>
    </ligand>
</feature>
<feature type="binding site" evidence="1">
    <location>
        <position position="167"/>
    </location>
    <ligand>
        <name>Zn(2+)</name>
        <dbReference type="ChEBI" id="CHEBI:29105"/>
        <label>2</label>
    </ligand>
</feature>
<feature type="binding site" evidence="1">
    <location>
        <position position="170"/>
    </location>
    <ligand>
        <name>Zn(2+)</name>
        <dbReference type="ChEBI" id="CHEBI:29105"/>
        <label>2</label>
    </ligand>
</feature>
<feature type="binding site" evidence="1">
    <location>
        <position position="189"/>
    </location>
    <ligand>
        <name>Zn(2+)</name>
        <dbReference type="ChEBI" id="CHEBI:29105"/>
        <label>2</label>
    </ligand>
</feature>
<feature type="binding site" evidence="1">
    <location>
        <position position="192"/>
    </location>
    <ligand>
        <name>Zn(2+)</name>
        <dbReference type="ChEBI" id="CHEBI:29105"/>
        <label>2</label>
    </ligand>
</feature>
<feature type="binding site" evidence="1">
    <location>
        <position position="203"/>
    </location>
    <ligand>
        <name>Zn(2+)</name>
        <dbReference type="ChEBI" id="CHEBI:29105"/>
        <label>1</label>
    </ligand>
</feature>
<feature type="binding site" evidence="1">
    <location>
        <position position="206"/>
    </location>
    <ligand>
        <name>Zn(2+)</name>
        <dbReference type="ChEBI" id="CHEBI:29105"/>
        <label>1</label>
    </ligand>
</feature>
<comment type="function">
    <text evidence="1">Participates actively in the response to hyperosmotic and heat shock by preventing the aggregation of stress-denatured proteins and by disaggregating proteins, also in an autonomous, DnaK-independent fashion. Unfolded proteins bind initially to DnaJ; upon interaction with the DnaJ-bound protein, DnaK hydrolyzes its bound ATP, resulting in the formation of a stable complex. GrpE releases ADP from DnaK; ATP binding to DnaK triggers the release of the substrate protein, thus completing the reaction cycle. Several rounds of ATP-dependent interactions between DnaJ, DnaK and GrpE are required for fully efficient folding. Also involved, together with DnaK and GrpE, in the DNA replication of plasmids through activation of initiation proteins.</text>
</comment>
<comment type="cofactor">
    <cofactor evidence="1">
        <name>Zn(2+)</name>
        <dbReference type="ChEBI" id="CHEBI:29105"/>
    </cofactor>
    <text evidence="1">Binds 2 Zn(2+) ions per monomer.</text>
</comment>
<comment type="subunit">
    <text evidence="1">Homodimer.</text>
</comment>
<comment type="subcellular location">
    <subcellularLocation>
        <location evidence="1">Cytoplasm</location>
    </subcellularLocation>
</comment>
<comment type="domain">
    <text evidence="1">The J domain is necessary and sufficient to stimulate DnaK ATPase activity. Zinc center 1 plays an important role in the autonomous, DnaK-independent chaperone activity of DnaJ. Zinc center 2 is essential for interaction with DnaK and for DnaJ activity.</text>
</comment>
<comment type="similarity">
    <text evidence="1">Belongs to the DnaJ family.</text>
</comment>